<gene>
    <name evidence="1" type="primary">aspS</name>
    <name type="ordered locus">TGRD_335</name>
</gene>
<comment type="function">
    <text evidence="1">Aspartyl-tRNA synthetase with relaxed tRNA specificity since it is able to aspartylate not only its cognate tRNA(Asp) but also tRNA(Asn). Reaction proceeds in two steps: L-aspartate is first activated by ATP to form Asp-AMP and then transferred to the acceptor end of tRNA(Asp/Asn).</text>
</comment>
<comment type="catalytic activity">
    <reaction evidence="1">
        <text>tRNA(Asx) + L-aspartate + ATP = L-aspartyl-tRNA(Asx) + AMP + diphosphate</text>
        <dbReference type="Rhea" id="RHEA:18349"/>
        <dbReference type="Rhea" id="RHEA-COMP:9710"/>
        <dbReference type="Rhea" id="RHEA-COMP:9711"/>
        <dbReference type="ChEBI" id="CHEBI:29991"/>
        <dbReference type="ChEBI" id="CHEBI:30616"/>
        <dbReference type="ChEBI" id="CHEBI:33019"/>
        <dbReference type="ChEBI" id="CHEBI:78442"/>
        <dbReference type="ChEBI" id="CHEBI:78516"/>
        <dbReference type="ChEBI" id="CHEBI:456215"/>
        <dbReference type="EC" id="6.1.1.23"/>
    </reaction>
</comment>
<comment type="subunit">
    <text evidence="1">Homodimer.</text>
</comment>
<comment type="subcellular location">
    <subcellularLocation>
        <location evidence="1">Cytoplasm</location>
    </subcellularLocation>
</comment>
<comment type="similarity">
    <text evidence="1">Belongs to the class-II aminoacyl-tRNA synthetase family. Type 1 subfamily.</text>
</comment>
<proteinExistence type="inferred from homology"/>
<organism>
    <name type="scientific">Endomicrobium trichonymphae</name>
    <dbReference type="NCBI Taxonomy" id="1408204"/>
    <lineage>
        <taxon>Bacteria</taxon>
        <taxon>Pseudomonadati</taxon>
        <taxon>Elusimicrobiota</taxon>
        <taxon>Endomicrobiia</taxon>
        <taxon>Endomicrobiales</taxon>
        <taxon>Endomicrobiaceae</taxon>
        <taxon>Candidatus Endomicrobiellum</taxon>
    </lineage>
</organism>
<feature type="chain" id="PRO_1000199023" description="Aspartate--tRNA(Asp/Asn) ligase">
    <location>
        <begin position="1"/>
        <end position="584"/>
    </location>
</feature>
<feature type="region of interest" description="Aspartate" evidence="1">
    <location>
        <begin position="198"/>
        <end position="201"/>
    </location>
</feature>
<feature type="binding site" evidence="1">
    <location>
        <position position="174"/>
    </location>
    <ligand>
        <name>L-aspartate</name>
        <dbReference type="ChEBI" id="CHEBI:29991"/>
    </ligand>
</feature>
<feature type="binding site" evidence="1">
    <location>
        <begin position="220"/>
        <end position="222"/>
    </location>
    <ligand>
        <name>ATP</name>
        <dbReference type="ChEBI" id="CHEBI:30616"/>
    </ligand>
</feature>
<feature type="binding site" evidence="1">
    <location>
        <position position="220"/>
    </location>
    <ligand>
        <name>L-aspartate</name>
        <dbReference type="ChEBI" id="CHEBI:29991"/>
    </ligand>
</feature>
<feature type="binding site" evidence="1">
    <location>
        <position position="229"/>
    </location>
    <ligand>
        <name>ATP</name>
        <dbReference type="ChEBI" id="CHEBI:30616"/>
    </ligand>
</feature>
<feature type="binding site" evidence="1">
    <location>
        <position position="447"/>
    </location>
    <ligand>
        <name>L-aspartate</name>
        <dbReference type="ChEBI" id="CHEBI:29991"/>
    </ligand>
</feature>
<feature type="binding site" evidence="1">
    <location>
        <position position="480"/>
    </location>
    <ligand>
        <name>ATP</name>
        <dbReference type="ChEBI" id="CHEBI:30616"/>
    </ligand>
</feature>
<feature type="binding site" evidence="1">
    <location>
        <position position="487"/>
    </location>
    <ligand>
        <name>L-aspartate</name>
        <dbReference type="ChEBI" id="CHEBI:29991"/>
    </ligand>
</feature>
<feature type="binding site" evidence="1">
    <location>
        <begin position="532"/>
        <end position="535"/>
    </location>
    <ligand>
        <name>ATP</name>
        <dbReference type="ChEBI" id="CHEBI:30616"/>
    </ligand>
</feature>
<feature type="site" description="Important for tRNA non-discrimination" evidence="1">
    <location>
        <position position="31"/>
    </location>
</feature>
<feature type="site" description="Important for tRNA non-discrimination" evidence="1">
    <location>
        <position position="82"/>
    </location>
</feature>
<evidence type="ECO:0000255" key="1">
    <source>
        <dbReference type="HAMAP-Rule" id="MF_00044"/>
    </source>
</evidence>
<keyword id="KW-0030">Aminoacyl-tRNA synthetase</keyword>
<keyword id="KW-0067">ATP-binding</keyword>
<keyword id="KW-0963">Cytoplasm</keyword>
<keyword id="KW-0436">Ligase</keyword>
<keyword id="KW-0547">Nucleotide-binding</keyword>
<keyword id="KW-0648">Protein biosynthesis</keyword>
<sequence>MKRSGYCGDIRESSIGKEIAVCGWVHSRRDHGGVIFIDLRDREGILQIVFQPENKEIFEAAEKLRSEYVIAVKGWVRNRPFGTLNTNMSTGNVELVAVELKILNTSPGLPFEISDYIDTSEELRLKYRYLDLRRPNLQKNFVMRHKISKEIRNFLNEEGFLEIETPFLTKSTPEGARDFLVPSRLHHGNFFALPQSPQLFKQILMSAGFDKYYQIVRCFRDEDLRADRQPEFTQVDVEMSFVDEEDVMVVIERMLARVFKMTLNLDIKMPFERMPYSEAMLRFGSDKPDTRFEVEIKDFSRELKNSGFSVFSSVISKGGIVRGLCIPKGASFSRSEIAGLTKFVGEYGAKGLVWMKITDTGADSNIVKYFKEYEIRVFISKLNAKSGDLIVFLADEEKTVAQGLGALRLKVGRESGLIDKNKFNFLWVVDFPLMEWDKEEQRWQALHHPFTLPKDADSLTKENAGRAKAKAYDVVLNGIELGGGSIRIHKSGIQKKIFNILDISDESAEKKFGFLLKALTYGAPPHGGAALGFDRLCALISGEDSIREVIAFPKTQKAVDPLSNAPAAVSDNHLKELGLQQIEN</sequence>
<dbReference type="EC" id="6.1.1.23" evidence="1"/>
<dbReference type="EMBL" id="AP009510">
    <property type="protein sequence ID" value="BAG13818.1"/>
    <property type="molecule type" value="Genomic_DNA"/>
</dbReference>
<dbReference type="RefSeq" id="WP_015423345.1">
    <property type="nucleotide sequence ID" value="NC_020419.1"/>
</dbReference>
<dbReference type="SMR" id="B1GZY6"/>
<dbReference type="STRING" id="471821.TGRD_335"/>
<dbReference type="KEGG" id="rsd:TGRD_335"/>
<dbReference type="PATRIC" id="fig|471821.5.peg.532"/>
<dbReference type="HOGENOM" id="CLU_014330_3_2_0"/>
<dbReference type="Proteomes" id="UP000001691">
    <property type="component" value="Chromosome"/>
</dbReference>
<dbReference type="GO" id="GO:0005737">
    <property type="term" value="C:cytoplasm"/>
    <property type="evidence" value="ECO:0007669"/>
    <property type="project" value="UniProtKB-SubCell"/>
</dbReference>
<dbReference type="GO" id="GO:0004815">
    <property type="term" value="F:aspartate-tRNA ligase activity"/>
    <property type="evidence" value="ECO:0007669"/>
    <property type="project" value="UniProtKB-UniRule"/>
</dbReference>
<dbReference type="GO" id="GO:0050560">
    <property type="term" value="F:aspartate-tRNA(Asn) ligase activity"/>
    <property type="evidence" value="ECO:0007669"/>
    <property type="project" value="UniProtKB-EC"/>
</dbReference>
<dbReference type="GO" id="GO:0005524">
    <property type="term" value="F:ATP binding"/>
    <property type="evidence" value="ECO:0007669"/>
    <property type="project" value="UniProtKB-UniRule"/>
</dbReference>
<dbReference type="GO" id="GO:0003676">
    <property type="term" value="F:nucleic acid binding"/>
    <property type="evidence" value="ECO:0007669"/>
    <property type="project" value="InterPro"/>
</dbReference>
<dbReference type="GO" id="GO:0006422">
    <property type="term" value="P:aspartyl-tRNA aminoacylation"/>
    <property type="evidence" value="ECO:0007669"/>
    <property type="project" value="UniProtKB-UniRule"/>
</dbReference>
<dbReference type="CDD" id="cd00777">
    <property type="entry name" value="AspRS_core"/>
    <property type="match status" value="1"/>
</dbReference>
<dbReference type="CDD" id="cd04317">
    <property type="entry name" value="EcAspRS_like_N"/>
    <property type="match status" value="1"/>
</dbReference>
<dbReference type="Gene3D" id="3.30.930.10">
    <property type="entry name" value="Bira Bifunctional Protein, Domain 2"/>
    <property type="match status" value="1"/>
</dbReference>
<dbReference type="Gene3D" id="3.30.1360.30">
    <property type="entry name" value="GAD-like domain"/>
    <property type="match status" value="1"/>
</dbReference>
<dbReference type="Gene3D" id="2.40.50.140">
    <property type="entry name" value="Nucleic acid-binding proteins"/>
    <property type="match status" value="1"/>
</dbReference>
<dbReference type="HAMAP" id="MF_00044">
    <property type="entry name" value="Asp_tRNA_synth_type1"/>
    <property type="match status" value="1"/>
</dbReference>
<dbReference type="InterPro" id="IPR004364">
    <property type="entry name" value="Aa-tRNA-synt_II"/>
</dbReference>
<dbReference type="InterPro" id="IPR006195">
    <property type="entry name" value="aa-tRNA-synth_II"/>
</dbReference>
<dbReference type="InterPro" id="IPR045864">
    <property type="entry name" value="aa-tRNA-synth_II/BPL/LPL"/>
</dbReference>
<dbReference type="InterPro" id="IPR004524">
    <property type="entry name" value="Asp-tRNA-ligase_1"/>
</dbReference>
<dbReference type="InterPro" id="IPR047089">
    <property type="entry name" value="Asp-tRNA-ligase_1_N"/>
</dbReference>
<dbReference type="InterPro" id="IPR002312">
    <property type="entry name" value="Asp/Asn-tRNA-synth_IIb"/>
</dbReference>
<dbReference type="InterPro" id="IPR047090">
    <property type="entry name" value="AspRS_core"/>
</dbReference>
<dbReference type="InterPro" id="IPR004115">
    <property type="entry name" value="GAD-like_sf"/>
</dbReference>
<dbReference type="InterPro" id="IPR029351">
    <property type="entry name" value="GAD_dom"/>
</dbReference>
<dbReference type="InterPro" id="IPR012340">
    <property type="entry name" value="NA-bd_OB-fold"/>
</dbReference>
<dbReference type="InterPro" id="IPR004365">
    <property type="entry name" value="NA-bd_OB_tRNA"/>
</dbReference>
<dbReference type="NCBIfam" id="TIGR00459">
    <property type="entry name" value="aspS_bact"/>
    <property type="match status" value="1"/>
</dbReference>
<dbReference type="NCBIfam" id="NF001750">
    <property type="entry name" value="PRK00476.1"/>
    <property type="match status" value="1"/>
</dbReference>
<dbReference type="PANTHER" id="PTHR22594:SF5">
    <property type="entry name" value="ASPARTATE--TRNA LIGASE, MITOCHONDRIAL"/>
    <property type="match status" value="1"/>
</dbReference>
<dbReference type="PANTHER" id="PTHR22594">
    <property type="entry name" value="ASPARTYL/LYSYL-TRNA SYNTHETASE"/>
    <property type="match status" value="1"/>
</dbReference>
<dbReference type="Pfam" id="PF02938">
    <property type="entry name" value="GAD"/>
    <property type="match status" value="1"/>
</dbReference>
<dbReference type="Pfam" id="PF00152">
    <property type="entry name" value="tRNA-synt_2"/>
    <property type="match status" value="1"/>
</dbReference>
<dbReference type="Pfam" id="PF01336">
    <property type="entry name" value="tRNA_anti-codon"/>
    <property type="match status" value="1"/>
</dbReference>
<dbReference type="PRINTS" id="PR01042">
    <property type="entry name" value="TRNASYNTHASP"/>
</dbReference>
<dbReference type="SUPFAM" id="SSF55681">
    <property type="entry name" value="Class II aaRS and biotin synthetases"/>
    <property type="match status" value="1"/>
</dbReference>
<dbReference type="SUPFAM" id="SSF55261">
    <property type="entry name" value="GAD domain-like"/>
    <property type="match status" value="1"/>
</dbReference>
<dbReference type="SUPFAM" id="SSF50249">
    <property type="entry name" value="Nucleic acid-binding proteins"/>
    <property type="match status" value="1"/>
</dbReference>
<dbReference type="PROSITE" id="PS50862">
    <property type="entry name" value="AA_TRNA_LIGASE_II"/>
    <property type="match status" value="1"/>
</dbReference>
<name>SYDND_ENDTX</name>
<reference key="1">
    <citation type="journal article" date="2008" name="Proc. Natl. Acad. Sci. U.S.A.">
        <title>Complete genome of the uncultured termite group 1 bacteria in a single host protist cell.</title>
        <authorList>
            <person name="Hongoh Y."/>
            <person name="Sharma V.K."/>
            <person name="Prakash T."/>
            <person name="Noda S."/>
            <person name="Taylor T.D."/>
            <person name="Kudo T."/>
            <person name="Sakaki Y."/>
            <person name="Toyoda A."/>
            <person name="Hattori M."/>
            <person name="Ohkuma M."/>
        </authorList>
    </citation>
    <scope>NUCLEOTIDE SEQUENCE [LARGE SCALE GENOMIC DNA]</scope>
</reference>
<accession>B1GZY6</accession>
<protein>
    <recommendedName>
        <fullName evidence="1">Aspartate--tRNA(Asp/Asn) ligase</fullName>
        <ecNumber evidence="1">6.1.1.23</ecNumber>
    </recommendedName>
    <alternativeName>
        <fullName evidence="1">Aspartyl-tRNA synthetase</fullName>
        <shortName evidence="1">AspRS</shortName>
    </alternativeName>
    <alternativeName>
        <fullName evidence="1">Non-discriminating aspartyl-tRNA synthetase</fullName>
        <shortName evidence="1">ND-AspRS</shortName>
    </alternativeName>
</protein>